<feature type="chain" id="PRO_0000104465" description="Large ribosomal subunit protein uL11">
    <location>
        <begin position="1"/>
        <end position="165"/>
    </location>
</feature>
<feature type="modified residue" description="N5-methylarginine" evidence="1">
    <location>
        <position position="67"/>
    </location>
</feature>
<accession>Q9C285</accession>
<accession>Q7S7W5</accession>
<protein>
    <recommendedName>
        <fullName evidence="3">Large ribosomal subunit protein uL11</fullName>
    </recommendedName>
    <alternativeName>
        <fullName>60S ribosomal protein L12</fullName>
    </alternativeName>
</protein>
<proteinExistence type="inferred from homology"/>
<dbReference type="EMBL" id="AL513464">
    <property type="protein sequence ID" value="CAC28787.1"/>
    <property type="molecule type" value="Genomic_DNA"/>
</dbReference>
<dbReference type="EMBL" id="CM002240">
    <property type="protein sequence ID" value="EAA32167.1"/>
    <property type="molecule type" value="Genomic_DNA"/>
</dbReference>
<dbReference type="RefSeq" id="XP_961403.1">
    <property type="nucleotide sequence ID" value="XM_956310.3"/>
</dbReference>
<dbReference type="SMR" id="Q9C285"/>
<dbReference type="FunCoup" id="Q9C285">
    <property type="interactions" value="945"/>
</dbReference>
<dbReference type="STRING" id="367110.Q9C285"/>
<dbReference type="PaxDb" id="5141-EFNCRP00000004135"/>
<dbReference type="EnsemblFungi" id="EAA32167">
    <property type="protein sequence ID" value="EAA32167"/>
    <property type="gene ID" value="NCU01317"/>
</dbReference>
<dbReference type="GeneID" id="3877563"/>
<dbReference type="KEGG" id="ncr:NCU01317"/>
<dbReference type="VEuPathDB" id="FungiDB:NCU01317"/>
<dbReference type="HOGENOM" id="CLU_074237_5_0_1"/>
<dbReference type="InParanoid" id="Q9C285"/>
<dbReference type="OMA" id="QPPHDVI"/>
<dbReference type="OrthoDB" id="1478556at2759"/>
<dbReference type="Proteomes" id="UP000001805">
    <property type="component" value="Chromosome 2, Linkage Group V"/>
</dbReference>
<dbReference type="GO" id="GO:0022625">
    <property type="term" value="C:cytosolic large ribosomal subunit"/>
    <property type="evidence" value="ECO:0000318"/>
    <property type="project" value="GO_Central"/>
</dbReference>
<dbReference type="GO" id="GO:0070180">
    <property type="term" value="F:large ribosomal subunit rRNA binding"/>
    <property type="evidence" value="ECO:0000318"/>
    <property type="project" value="GO_Central"/>
</dbReference>
<dbReference type="GO" id="GO:0003735">
    <property type="term" value="F:structural constituent of ribosome"/>
    <property type="evidence" value="ECO:0000318"/>
    <property type="project" value="GO_Central"/>
</dbReference>
<dbReference type="GO" id="GO:0006412">
    <property type="term" value="P:translation"/>
    <property type="evidence" value="ECO:0000318"/>
    <property type="project" value="GO_Central"/>
</dbReference>
<dbReference type="CDD" id="cd00349">
    <property type="entry name" value="Ribosomal_L11"/>
    <property type="match status" value="1"/>
</dbReference>
<dbReference type="FunFam" id="1.10.10.250:FF:000002">
    <property type="entry name" value="60S ribosomal protein L12"/>
    <property type="match status" value="1"/>
</dbReference>
<dbReference type="FunFam" id="3.30.1550.10:FF:000002">
    <property type="entry name" value="60S ribosomal protein L12"/>
    <property type="match status" value="1"/>
</dbReference>
<dbReference type="Gene3D" id="1.10.10.250">
    <property type="entry name" value="Ribosomal protein L11, C-terminal domain"/>
    <property type="match status" value="1"/>
</dbReference>
<dbReference type="Gene3D" id="3.30.1550.10">
    <property type="entry name" value="Ribosomal protein L11/L12, N-terminal domain"/>
    <property type="match status" value="1"/>
</dbReference>
<dbReference type="HAMAP" id="MF_00736">
    <property type="entry name" value="Ribosomal_uL11"/>
    <property type="match status" value="1"/>
</dbReference>
<dbReference type="InterPro" id="IPR000911">
    <property type="entry name" value="Ribosomal_uL11"/>
</dbReference>
<dbReference type="InterPro" id="IPR020783">
    <property type="entry name" value="Ribosomal_uL11_C"/>
</dbReference>
<dbReference type="InterPro" id="IPR036769">
    <property type="entry name" value="Ribosomal_uL11_C_sf"/>
</dbReference>
<dbReference type="InterPro" id="IPR020784">
    <property type="entry name" value="Ribosomal_uL11_N"/>
</dbReference>
<dbReference type="InterPro" id="IPR036796">
    <property type="entry name" value="Ribosomal_uL11_N_sf"/>
</dbReference>
<dbReference type="PANTHER" id="PTHR11661">
    <property type="entry name" value="60S RIBOSOMAL PROTEIN L12"/>
    <property type="match status" value="1"/>
</dbReference>
<dbReference type="PANTHER" id="PTHR11661:SF2">
    <property type="entry name" value="LARGE RIBOSOMAL SUBUNIT PROTEIN UL11"/>
    <property type="match status" value="1"/>
</dbReference>
<dbReference type="Pfam" id="PF00298">
    <property type="entry name" value="Ribosomal_L11"/>
    <property type="match status" value="1"/>
</dbReference>
<dbReference type="Pfam" id="PF03946">
    <property type="entry name" value="Ribosomal_L11_N"/>
    <property type="match status" value="1"/>
</dbReference>
<dbReference type="SMART" id="SM00649">
    <property type="entry name" value="RL11"/>
    <property type="match status" value="1"/>
</dbReference>
<dbReference type="SUPFAM" id="SSF54747">
    <property type="entry name" value="Ribosomal L11/L12e N-terminal domain"/>
    <property type="match status" value="1"/>
</dbReference>
<dbReference type="SUPFAM" id="SSF46906">
    <property type="entry name" value="Ribosomal protein L11, C-terminal domain"/>
    <property type="match status" value="1"/>
</dbReference>
<sequence length="165" mass="17694">MPPKFDPNEVKVITLRATGGEVGASSALAPKIGPLGLSPKKVGEDIAKATGDWKGLRVTVKLTIQNRQAAVSVVPTASALVIRALKEPPRDRKKEKNIKHNKSVSFDEIVEIARTMRFKSFSKELKGTVLEVLGTAFSVGCQVDGKSPKAVQEAIHAGEIDVPEE</sequence>
<name>RL12_NEUCR</name>
<reference key="1">
    <citation type="journal article" date="2003" name="Nucleic Acids Res.">
        <title>What's in the genome of a filamentous fungus? Analysis of the Neurospora genome sequence.</title>
        <authorList>
            <person name="Mannhaupt G."/>
            <person name="Montrone C."/>
            <person name="Haase D."/>
            <person name="Mewes H.-W."/>
            <person name="Aign V."/>
            <person name="Hoheisel J.D."/>
            <person name="Fartmann B."/>
            <person name="Nyakatura G."/>
            <person name="Kempken F."/>
            <person name="Maier J."/>
            <person name="Schulte U."/>
        </authorList>
    </citation>
    <scope>NUCLEOTIDE SEQUENCE [LARGE SCALE GENOMIC DNA]</scope>
    <source>
        <strain>ATCC 24698 / 74-OR23-1A / CBS 708.71 / DSM 1257 / FGSC 987</strain>
    </source>
</reference>
<reference key="2">
    <citation type="journal article" date="2003" name="Nature">
        <title>The genome sequence of the filamentous fungus Neurospora crassa.</title>
        <authorList>
            <person name="Galagan J.E."/>
            <person name="Calvo S.E."/>
            <person name="Borkovich K.A."/>
            <person name="Selker E.U."/>
            <person name="Read N.D."/>
            <person name="Jaffe D.B."/>
            <person name="FitzHugh W."/>
            <person name="Ma L.-J."/>
            <person name="Smirnov S."/>
            <person name="Purcell S."/>
            <person name="Rehman B."/>
            <person name="Elkins T."/>
            <person name="Engels R."/>
            <person name="Wang S."/>
            <person name="Nielsen C.B."/>
            <person name="Butler J."/>
            <person name="Endrizzi M."/>
            <person name="Qui D."/>
            <person name="Ianakiev P."/>
            <person name="Bell-Pedersen D."/>
            <person name="Nelson M.A."/>
            <person name="Werner-Washburne M."/>
            <person name="Selitrennikoff C.P."/>
            <person name="Kinsey J.A."/>
            <person name="Braun E.L."/>
            <person name="Zelter A."/>
            <person name="Schulte U."/>
            <person name="Kothe G.O."/>
            <person name="Jedd G."/>
            <person name="Mewes H.-W."/>
            <person name="Staben C."/>
            <person name="Marcotte E."/>
            <person name="Greenberg D."/>
            <person name="Roy A."/>
            <person name="Foley K."/>
            <person name="Naylor J."/>
            <person name="Stange-Thomann N."/>
            <person name="Barrett R."/>
            <person name="Gnerre S."/>
            <person name="Kamal M."/>
            <person name="Kamvysselis M."/>
            <person name="Mauceli E.W."/>
            <person name="Bielke C."/>
            <person name="Rudd S."/>
            <person name="Frishman D."/>
            <person name="Krystofova S."/>
            <person name="Rasmussen C."/>
            <person name="Metzenberg R.L."/>
            <person name="Perkins D.D."/>
            <person name="Kroken S."/>
            <person name="Cogoni C."/>
            <person name="Macino G."/>
            <person name="Catcheside D.E.A."/>
            <person name="Li W."/>
            <person name="Pratt R.J."/>
            <person name="Osmani S.A."/>
            <person name="DeSouza C.P.C."/>
            <person name="Glass N.L."/>
            <person name="Orbach M.J."/>
            <person name="Berglund J.A."/>
            <person name="Voelker R."/>
            <person name="Yarden O."/>
            <person name="Plamann M."/>
            <person name="Seiler S."/>
            <person name="Dunlap J.C."/>
            <person name="Radford A."/>
            <person name="Aramayo R."/>
            <person name="Natvig D.O."/>
            <person name="Alex L.A."/>
            <person name="Mannhaupt G."/>
            <person name="Ebbole D.J."/>
            <person name="Freitag M."/>
            <person name="Paulsen I."/>
            <person name="Sachs M.S."/>
            <person name="Lander E.S."/>
            <person name="Nusbaum C."/>
            <person name="Birren B.W."/>
        </authorList>
    </citation>
    <scope>NUCLEOTIDE SEQUENCE [LARGE SCALE GENOMIC DNA]</scope>
    <source>
        <strain>ATCC 24698 / 74-OR23-1A / CBS 708.71 / DSM 1257 / FGSC 987</strain>
    </source>
</reference>
<gene>
    <name type="primary">rpl-12</name>
    <name type="ORF">B12K8.20</name>
    <name type="ORF">NCU01317</name>
</gene>
<evidence type="ECO:0000250" key="1"/>
<evidence type="ECO:0000250" key="2">
    <source>
        <dbReference type="UniProtKB" id="P0CX53"/>
    </source>
</evidence>
<evidence type="ECO:0000305" key="3"/>
<keyword id="KW-0963">Cytoplasm</keyword>
<keyword id="KW-0488">Methylation</keyword>
<keyword id="KW-1185">Reference proteome</keyword>
<keyword id="KW-0687">Ribonucleoprotein</keyword>
<keyword id="KW-0689">Ribosomal protein</keyword>
<keyword id="KW-0694">RNA-binding</keyword>
<organism>
    <name type="scientific">Neurospora crassa (strain ATCC 24698 / 74-OR23-1A / CBS 708.71 / DSM 1257 / FGSC 987)</name>
    <dbReference type="NCBI Taxonomy" id="367110"/>
    <lineage>
        <taxon>Eukaryota</taxon>
        <taxon>Fungi</taxon>
        <taxon>Dikarya</taxon>
        <taxon>Ascomycota</taxon>
        <taxon>Pezizomycotina</taxon>
        <taxon>Sordariomycetes</taxon>
        <taxon>Sordariomycetidae</taxon>
        <taxon>Sordariales</taxon>
        <taxon>Sordariaceae</taxon>
        <taxon>Neurospora</taxon>
    </lineage>
</organism>
<comment type="function">
    <text evidence="2">Component of the ribosome, a large ribonucleoprotein complex responsible for the synthesis of proteins in the cell. The small ribosomal subunit (SSU) binds messenger RNAs (mRNAs) and translates the encoded message by selecting cognate aminoacyl-transfer RNA (tRNA) molecules. The large subunit (LSU) contains the ribosomal catalytic site termed the peptidyl transferase center (PTC), which catalyzes the formation of peptide bonds, thereby polymerizing the amino acids delivered by tRNAs into a polypeptide chain. The nascent polypeptides leave the ribosome through a tunnel in the LSU and interact with protein factors that function in enzymatic processing, targeting, and the membrane insertion of nascent chains at the exit of the ribosomal tunnel.</text>
</comment>
<comment type="subunit">
    <text evidence="3">Component of the large ribosomal subunit (LSU). Mature N.crassa ribosomes consist of a small (40S) and a large (60S) subunit. The 40S small subunit contains 1 molecule of ribosomal RNA (18S rRNA) and at least 32 different proteins. The large 60S subunit contains 3 rRNA molecules (26S, 5.8S and 5S rRNA) and at least 42 different proteins.</text>
</comment>
<comment type="subcellular location">
    <subcellularLocation>
        <location evidence="2">Cytoplasm</location>
    </subcellularLocation>
</comment>
<comment type="similarity">
    <text evidence="3">Belongs to the universal ribosomal protein uL11 family.</text>
</comment>